<reference key="1">
    <citation type="journal article" date="2008" name="J. Bacteriol.">
        <title>The pangenome structure of Escherichia coli: comparative genomic analysis of E. coli commensal and pathogenic isolates.</title>
        <authorList>
            <person name="Rasko D.A."/>
            <person name="Rosovitz M.J."/>
            <person name="Myers G.S.A."/>
            <person name="Mongodin E.F."/>
            <person name="Fricke W.F."/>
            <person name="Gajer P."/>
            <person name="Crabtree J."/>
            <person name="Sebaihia M."/>
            <person name="Thomson N.R."/>
            <person name="Chaudhuri R."/>
            <person name="Henderson I.R."/>
            <person name="Sperandio V."/>
            <person name="Ravel J."/>
        </authorList>
    </citation>
    <scope>NUCLEOTIDE SEQUENCE [LARGE SCALE GENOMIC DNA]</scope>
    <source>
        <strain>E24377A / ETEC</strain>
    </source>
</reference>
<accession>A7ZKB3</accession>
<name>RUTE_ECO24</name>
<protein>
    <recommendedName>
        <fullName evidence="1">Probable malonic semialdehyde reductase RutE</fullName>
        <ecNumber evidence="1">1.1.1.298</ecNumber>
    </recommendedName>
</protein>
<sequence length="196" mass="21607">MNEAVSPGALSTLFTDARTHNGWRETPVSDETLRELYALMKWGPTSANCSPARIVFIRTVEGKERLRPALSSGNLQKTLTAPVTAIVAWDSEFYERLPLLFPHGDARSWFTSSPQLAEETAFRNSSMQAAYLIVACRALGLDTGPMSGFDRQYVDDAFFAGSTLKSNLLINIGYGDSSKLYARLPRLSFEEACGLL</sequence>
<dbReference type="EC" id="1.1.1.298" evidence="1"/>
<dbReference type="EMBL" id="CP000800">
    <property type="protein sequence ID" value="ABV18460.1"/>
    <property type="molecule type" value="Genomic_DNA"/>
</dbReference>
<dbReference type="RefSeq" id="WP_001001196.1">
    <property type="nucleotide sequence ID" value="NC_009801.1"/>
</dbReference>
<dbReference type="SMR" id="A7ZKB3"/>
<dbReference type="KEGG" id="ecw:EcE24377A_1126"/>
<dbReference type="HOGENOM" id="CLU_084441_0_0_6"/>
<dbReference type="Proteomes" id="UP000001122">
    <property type="component" value="Chromosome"/>
</dbReference>
<dbReference type="GO" id="GO:0035527">
    <property type="term" value="F:3-hydroxypropionate dehydrogenase (NADP+) activity"/>
    <property type="evidence" value="ECO:0007669"/>
    <property type="project" value="UniProtKB-UniRule"/>
</dbReference>
<dbReference type="GO" id="GO:0019740">
    <property type="term" value="P:nitrogen utilization"/>
    <property type="evidence" value="ECO:0007669"/>
    <property type="project" value="UniProtKB-UniRule"/>
</dbReference>
<dbReference type="GO" id="GO:0006212">
    <property type="term" value="P:uracil catabolic process"/>
    <property type="evidence" value="ECO:0007669"/>
    <property type="project" value="UniProtKB-UniRule"/>
</dbReference>
<dbReference type="CDD" id="cd02148">
    <property type="entry name" value="RutE-like"/>
    <property type="match status" value="1"/>
</dbReference>
<dbReference type="FunFam" id="3.40.109.10:FF:000003">
    <property type="entry name" value="Probable malonic semialdehyde reductase RutE"/>
    <property type="match status" value="1"/>
</dbReference>
<dbReference type="Gene3D" id="3.40.109.10">
    <property type="entry name" value="NADH Oxidase"/>
    <property type="match status" value="1"/>
</dbReference>
<dbReference type="HAMAP" id="MF_01204">
    <property type="entry name" value="Oxidoreductase_RutE_HadB"/>
    <property type="match status" value="1"/>
</dbReference>
<dbReference type="InterPro" id="IPR029479">
    <property type="entry name" value="Nitroreductase"/>
</dbReference>
<dbReference type="InterPro" id="IPR000415">
    <property type="entry name" value="Nitroreductase-like"/>
</dbReference>
<dbReference type="InterPro" id="IPR050461">
    <property type="entry name" value="Nitroreductase_HadB/RutE"/>
</dbReference>
<dbReference type="InterPro" id="IPR023936">
    <property type="entry name" value="RutE-like"/>
</dbReference>
<dbReference type="NCBIfam" id="NF003768">
    <property type="entry name" value="PRK05365.1"/>
    <property type="match status" value="1"/>
</dbReference>
<dbReference type="PANTHER" id="PTHR43543">
    <property type="entry name" value="MALONIC SEMIALDEHYDE REDUCTASE RUTE-RELATED"/>
    <property type="match status" value="1"/>
</dbReference>
<dbReference type="PANTHER" id="PTHR43543:SF1">
    <property type="entry name" value="MALONIC SEMIALDEHYDE REDUCTASE RUTE-RELATED"/>
    <property type="match status" value="1"/>
</dbReference>
<dbReference type="Pfam" id="PF00881">
    <property type="entry name" value="Nitroreductase"/>
    <property type="match status" value="1"/>
</dbReference>
<dbReference type="SUPFAM" id="SSF55469">
    <property type="entry name" value="FMN-dependent nitroreductase-like"/>
    <property type="match status" value="1"/>
</dbReference>
<keyword id="KW-0285">Flavoprotein</keyword>
<keyword id="KW-0288">FMN</keyword>
<keyword id="KW-0520">NAD</keyword>
<keyword id="KW-0521">NADP</keyword>
<keyword id="KW-0560">Oxidoreductase</keyword>
<keyword id="KW-1185">Reference proteome</keyword>
<feature type="chain" id="PRO_1000066134" description="Probable malonic semialdehyde reductase RutE">
    <location>
        <begin position="1"/>
        <end position="196"/>
    </location>
</feature>
<evidence type="ECO:0000255" key="1">
    <source>
        <dbReference type="HAMAP-Rule" id="MF_01204"/>
    </source>
</evidence>
<proteinExistence type="inferred from homology"/>
<gene>
    <name evidence="1" type="primary">rutE</name>
    <name type="ordered locus">EcE24377A_1126</name>
</gene>
<comment type="function">
    <text evidence="1">May reduce toxic product malonic semialdehyde to 3-hydroxypropionic acid, which is excreted.</text>
</comment>
<comment type="catalytic activity">
    <reaction evidence="1">
        <text>3-hydroxypropanoate + NADP(+) = 3-oxopropanoate + NADPH + H(+)</text>
        <dbReference type="Rhea" id="RHEA:26438"/>
        <dbReference type="ChEBI" id="CHEBI:15378"/>
        <dbReference type="ChEBI" id="CHEBI:16510"/>
        <dbReference type="ChEBI" id="CHEBI:33190"/>
        <dbReference type="ChEBI" id="CHEBI:57783"/>
        <dbReference type="ChEBI" id="CHEBI:58349"/>
        <dbReference type="EC" id="1.1.1.298"/>
    </reaction>
</comment>
<comment type="cofactor">
    <cofactor evidence="1">
        <name>FMN</name>
        <dbReference type="ChEBI" id="CHEBI:58210"/>
    </cofactor>
</comment>
<comment type="induction">
    <text evidence="1">Up-regulated by the nitrogen regulatory protein C (NtrC also called GlnG) and repressed by RutR.</text>
</comment>
<comment type="similarity">
    <text evidence="1">Belongs to the nitroreductase family. HadB/RutE subfamily.</text>
</comment>
<organism>
    <name type="scientific">Escherichia coli O139:H28 (strain E24377A / ETEC)</name>
    <dbReference type="NCBI Taxonomy" id="331111"/>
    <lineage>
        <taxon>Bacteria</taxon>
        <taxon>Pseudomonadati</taxon>
        <taxon>Pseudomonadota</taxon>
        <taxon>Gammaproteobacteria</taxon>
        <taxon>Enterobacterales</taxon>
        <taxon>Enterobacteriaceae</taxon>
        <taxon>Escherichia</taxon>
    </lineage>
</organism>